<dbReference type="EMBL" id="U77891">
    <property type="protein sequence ID" value="AAD04716.1"/>
    <property type="molecule type" value="Genomic_DNA"/>
</dbReference>
<dbReference type="SMR" id="Q9ZAU2"/>
<dbReference type="UniPathway" id="UPA00054"/>
<dbReference type="UniPathway" id="UPA01040"/>
<dbReference type="GO" id="GO:1901771">
    <property type="term" value="P:daunorubicin biosynthetic process"/>
    <property type="evidence" value="ECO:0000315"/>
    <property type="project" value="UniProtKB"/>
</dbReference>
<dbReference type="CDD" id="cd07247">
    <property type="entry name" value="SgaA_N_like"/>
    <property type="match status" value="2"/>
</dbReference>
<dbReference type="FunFam" id="3.10.180.10:FF:000067">
    <property type="entry name" value="Anthracycline biosynthesis protein DauV"/>
    <property type="match status" value="1"/>
</dbReference>
<dbReference type="Gene3D" id="3.10.180.10">
    <property type="entry name" value="2,3-Dihydroxybiphenyl 1,2-Dioxygenase, domain 1"/>
    <property type="match status" value="2"/>
</dbReference>
<dbReference type="InterPro" id="IPR052164">
    <property type="entry name" value="Anthracycline_SecMetBiosynth"/>
</dbReference>
<dbReference type="InterPro" id="IPR029068">
    <property type="entry name" value="Glyas_Bleomycin-R_OHBP_Dase"/>
</dbReference>
<dbReference type="InterPro" id="IPR004360">
    <property type="entry name" value="Glyas_Fos-R_dOase_dom"/>
</dbReference>
<dbReference type="InterPro" id="IPR037523">
    <property type="entry name" value="VOC"/>
</dbReference>
<dbReference type="PANTHER" id="PTHR33993:SF10">
    <property type="entry name" value="CONSERVED PROTEIN"/>
    <property type="match status" value="1"/>
</dbReference>
<dbReference type="PANTHER" id="PTHR33993">
    <property type="entry name" value="GLYOXALASE-RELATED"/>
    <property type="match status" value="1"/>
</dbReference>
<dbReference type="Pfam" id="PF00903">
    <property type="entry name" value="Glyoxalase"/>
    <property type="match status" value="2"/>
</dbReference>
<dbReference type="SUPFAM" id="SSF54593">
    <property type="entry name" value="Glyoxalase/Bleomycin resistance protein/Dihydroxybiphenyl dioxygenase"/>
    <property type="match status" value="2"/>
</dbReference>
<dbReference type="PROSITE" id="PS51819">
    <property type="entry name" value="VOC"/>
    <property type="match status" value="2"/>
</dbReference>
<reference key="1">
    <citation type="journal article" date="1999" name="J. Bacteriol.">
        <title>Doxorubicin overproduction in Streptomyces peucetius: cloning and characterization of the dnrU ketoreductase and dnrV genes and the doxA cytochrome P-450 hydroxylase gene.</title>
        <authorList>
            <person name="Lomovskaya N."/>
            <person name="Otten S.L."/>
            <person name="Doi-Katayama Y."/>
            <person name="Fonstein L."/>
            <person name="Liu X.-C."/>
            <person name="Takatsu T."/>
            <person name="Inventi A."/>
            <person name="Filippi S."/>
            <person name="Torti F."/>
            <person name="Colombo A.L."/>
            <person name="Hutchinson C.R."/>
        </authorList>
    </citation>
    <scope>NUCLEOTIDE SEQUENCE [GENOMIC DNA]</scope>
    <scope>FUNCTION</scope>
    <source>
        <strain>ATCC 29050 / DSM 40754 / JCM 9920 / NBRC 100596 / NCIMB 10972</strain>
    </source>
</reference>
<sequence>MTRFAPGAPAWFDLGSPDVAASADFYTGLFGWTATVVSDPGAGGYTTFSSDGKLVAAVARHQIDTPYHRPYGPGNDQHGMPAIWTVYFATDDADALTKRVETAGGEVIMTPMDVLGLGRMAVFADPAGAAFAVWRKGVMEGAEVTGVPGSVGWVELVTDGIGAARDFYPATLGLAPADTGLKGVTDPVWHIGDTPVAGTQELGVTGAVRPHWAVLFAVHDCDATVRRAVELGGSVENEPADTPRGRRADLLDPHGAGFSVVELREGYPAAAGGAS</sequence>
<accession>Q9ZAU2</accession>
<proteinExistence type="predicted"/>
<organism>
    <name type="scientific">Streptomyces peucetius</name>
    <dbReference type="NCBI Taxonomy" id="1950"/>
    <lineage>
        <taxon>Bacteria</taxon>
        <taxon>Bacillati</taxon>
        <taxon>Actinomycetota</taxon>
        <taxon>Actinomycetes</taxon>
        <taxon>Kitasatosporales</taxon>
        <taxon>Streptomycetaceae</taxon>
        <taxon>Streptomyces</taxon>
    </lineage>
</organism>
<keyword id="KW-0045">Antibiotic biosynthesis</keyword>
<keyword id="KW-0677">Repeat</keyword>
<protein>
    <recommendedName>
        <fullName>Anthracycline biosynthesis protein DnrV</fullName>
    </recommendedName>
</protein>
<evidence type="ECO:0000255" key="1">
    <source>
        <dbReference type="PROSITE-ProRule" id="PRU01163"/>
    </source>
</evidence>
<evidence type="ECO:0000269" key="2">
    <source>
    </source>
</evidence>
<name>DNRV_STRPE</name>
<comment type="function">
    <text evidence="2">Involved in the biosynthesis of the anthracyclines carminomycin and daunorubicin (daunomycin) which are aromatic polyketide antibiotics that exhibit high cytotoxicity and are widely applied in the chemotherapy of a variety of cancers. In vivo, it acts jointly with DoxA in the conversion of 13-deoxycarminomycin and 13-deoxydaunorubicin to yield carminomycin and daunorubicin, respectively. In vitro, it also acts jointly with DoxA in the C-14 hydroxylation of daunorubicin to form doxorubicin, although this strain is not a doxorubicin producer.</text>
</comment>
<comment type="pathway">
    <text>Antibiotic biosynthesis; daunorubicin biosynthesis.</text>
</comment>
<comment type="pathway">
    <text>Antibiotic biosynthesis; carminomycin biosynthesis.</text>
</comment>
<feature type="chain" id="PRO_0000425686" description="Anthracycline biosynthesis protein DnrV">
    <location>
        <begin position="1"/>
        <end position="275"/>
    </location>
</feature>
<feature type="domain" description="VOC 1" evidence="1">
    <location>
        <begin position="8"/>
        <end position="136"/>
    </location>
</feature>
<feature type="domain" description="VOC 2" evidence="1">
    <location>
        <begin position="150"/>
        <end position="263"/>
    </location>
</feature>
<gene>
    <name type="primary">dnrV</name>
</gene>